<organism>
    <name type="scientific">Clostridium botulinum (strain Langeland / NCTC 10281 / Type F)</name>
    <dbReference type="NCBI Taxonomy" id="441772"/>
    <lineage>
        <taxon>Bacteria</taxon>
        <taxon>Bacillati</taxon>
        <taxon>Bacillota</taxon>
        <taxon>Clostridia</taxon>
        <taxon>Eubacteriales</taxon>
        <taxon>Clostridiaceae</taxon>
        <taxon>Clostridium</taxon>
    </lineage>
</organism>
<gene>
    <name evidence="1" type="primary">glmM</name>
    <name type="ordered locus">CLI_3603</name>
</gene>
<sequence>MGRMFGTDGVRGVANKELTADLAYKLGKAGAFILTEGTHRPKILVGMDTRISGDMLESALVAGILSVGAEAICVGVIPTPAIAYLTRKYNADAGVVISASHNPVEYNGIKFFNKNGYKLSDELEDSIQALIRDDFKDVPVLTGENIGRKIEEDGEAIRDYIDFAKSTIKGDLKGLKVALDCANGASYITSVEAFKELEAEVHVINNKPDGININRNSGSTHPEDLMEYVVKNNCHMGLAFDGDADRCLAIDEKGNLINGDFILAICGKELKKQGRLKKNTIVVTVMSNLGLDIAMKKEEINTIKTKVGDRYVLEEMLKNDYAIGGEQSGHIIFSDYNTTGDGLVTALQLAHIVKESGKTFSELCSIMKELPQVLVNAKVPNDQKDIYLKDEEIKSEIDTITKNLDGSGRVLIRPSGTEPLVRVMLEGENQKEIDKLAHGLAKLIENKVK</sequence>
<comment type="function">
    <text evidence="1">Catalyzes the conversion of glucosamine-6-phosphate to glucosamine-1-phosphate.</text>
</comment>
<comment type="catalytic activity">
    <reaction evidence="1">
        <text>alpha-D-glucosamine 1-phosphate = D-glucosamine 6-phosphate</text>
        <dbReference type="Rhea" id="RHEA:23424"/>
        <dbReference type="ChEBI" id="CHEBI:58516"/>
        <dbReference type="ChEBI" id="CHEBI:58725"/>
        <dbReference type="EC" id="5.4.2.10"/>
    </reaction>
</comment>
<comment type="cofactor">
    <cofactor evidence="1">
        <name>Mg(2+)</name>
        <dbReference type="ChEBI" id="CHEBI:18420"/>
    </cofactor>
    <text evidence="1">Binds 1 Mg(2+) ion per subunit.</text>
</comment>
<comment type="PTM">
    <text evidence="1">Activated by phosphorylation.</text>
</comment>
<comment type="similarity">
    <text evidence="1">Belongs to the phosphohexose mutase family.</text>
</comment>
<keyword id="KW-0413">Isomerase</keyword>
<keyword id="KW-0460">Magnesium</keyword>
<keyword id="KW-0479">Metal-binding</keyword>
<keyword id="KW-0597">Phosphoprotein</keyword>
<feature type="chain" id="PRO_1000068902" description="Phosphoglucosamine mutase">
    <location>
        <begin position="1"/>
        <end position="449"/>
    </location>
</feature>
<feature type="active site" description="Phosphoserine intermediate" evidence="1">
    <location>
        <position position="100"/>
    </location>
</feature>
<feature type="binding site" description="via phosphate group" evidence="1">
    <location>
        <position position="100"/>
    </location>
    <ligand>
        <name>Mg(2+)</name>
        <dbReference type="ChEBI" id="CHEBI:18420"/>
    </ligand>
</feature>
<feature type="binding site" evidence="1">
    <location>
        <position position="241"/>
    </location>
    <ligand>
        <name>Mg(2+)</name>
        <dbReference type="ChEBI" id="CHEBI:18420"/>
    </ligand>
</feature>
<feature type="binding site" evidence="1">
    <location>
        <position position="243"/>
    </location>
    <ligand>
        <name>Mg(2+)</name>
        <dbReference type="ChEBI" id="CHEBI:18420"/>
    </ligand>
</feature>
<feature type="binding site" evidence="1">
    <location>
        <position position="245"/>
    </location>
    <ligand>
        <name>Mg(2+)</name>
        <dbReference type="ChEBI" id="CHEBI:18420"/>
    </ligand>
</feature>
<feature type="modified residue" description="Phosphoserine" evidence="1">
    <location>
        <position position="100"/>
    </location>
</feature>
<reference key="1">
    <citation type="submission" date="2007-06" db="EMBL/GenBank/DDBJ databases">
        <authorList>
            <person name="Brinkac L.M."/>
            <person name="Daugherty S."/>
            <person name="Dodson R.J."/>
            <person name="Madupu R."/>
            <person name="Brown J.L."/>
            <person name="Bruce D."/>
            <person name="Detter C."/>
            <person name="Munk C."/>
            <person name="Smith L.A."/>
            <person name="Smith T.J."/>
            <person name="White O."/>
            <person name="Brettin T.S."/>
        </authorList>
    </citation>
    <scope>NUCLEOTIDE SEQUENCE [LARGE SCALE GENOMIC DNA]</scope>
    <source>
        <strain>Langeland / NCTC 10281 / Type F</strain>
    </source>
</reference>
<dbReference type="EC" id="5.4.2.10" evidence="1"/>
<dbReference type="EMBL" id="CP000728">
    <property type="protein sequence ID" value="ABS41696.1"/>
    <property type="molecule type" value="Genomic_DNA"/>
</dbReference>
<dbReference type="RefSeq" id="WP_012101109.1">
    <property type="nucleotide sequence ID" value="NC_009699.1"/>
</dbReference>
<dbReference type="SMR" id="A7GJ15"/>
<dbReference type="KEGG" id="cbf:CLI_3603"/>
<dbReference type="HOGENOM" id="CLU_016950_7_0_9"/>
<dbReference type="Proteomes" id="UP000002410">
    <property type="component" value="Chromosome"/>
</dbReference>
<dbReference type="GO" id="GO:0005829">
    <property type="term" value="C:cytosol"/>
    <property type="evidence" value="ECO:0007669"/>
    <property type="project" value="TreeGrafter"/>
</dbReference>
<dbReference type="GO" id="GO:0000287">
    <property type="term" value="F:magnesium ion binding"/>
    <property type="evidence" value="ECO:0007669"/>
    <property type="project" value="UniProtKB-UniRule"/>
</dbReference>
<dbReference type="GO" id="GO:0008966">
    <property type="term" value="F:phosphoglucosamine mutase activity"/>
    <property type="evidence" value="ECO:0007669"/>
    <property type="project" value="UniProtKB-UniRule"/>
</dbReference>
<dbReference type="GO" id="GO:0004615">
    <property type="term" value="F:phosphomannomutase activity"/>
    <property type="evidence" value="ECO:0007669"/>
    <property type="project" value="TreeGrafter"/>
</dbReference>
<dbReference type="GO" id="GO:0005975">
    <property type="term" value="P:carbohydrate metabolic process"/>
    <property type="evidence" value="ECO:0007669"/>
    <property type="project" value="InterPro"/>
</dbReference>
<dbReference type="GO" id="GO:0009252">
    <property type="term" value="P:peptidoglycan biosynthetic process"/>
    <property type="evidence" value="ECO:0007669"/>
    <property type="project" value="TreeGrafter"/>
</dbReference>
<dbReference type="GO" id="GO:0006048">
    <property type="term" value="P:UDP-N-acetylglucosamine biosynthetic process"/>
    <property type="evidence" value="ECO:0007669"/>
    <property type="project" value="TreeGrafter"/>
</dbReference>
<dbReference type="CDD" id="cd05802">
    <property type="entry name" value="GlmM"/>
    <property type="match status" value="1"/>
</dbReference>
<dbReference type="FunFam" id="3.30.310.50:FF:000001">
    <property type="entry name" value="Phosphoglucosamine mutase"/>
    <property type="match status" value="1"/>
</dbReference>
<dbReference type="FunFam" id="3.40.120.10:FF:000001">
    <property type="entry name" value="Phosphoglucosamine mutase"/>
    <property type="match status" value="1"/>
</dbReference>
<dbReference type="FunFam" id="3.40.120.10:FF:000002">
    <property type="entry name" value="Phosphoglucosamine mutase"/>
    <property type="match status" value="1"/>
</dbReference>
<dbReference type="Gene3D" id="3.40.120.10">
    <property type="entry name" value="Alpha-D-Glucose-1,6-Bisphosphate, subunit A, domain 3"/>
    <property type="match status" value="3"/>
</dbReference>
<dbReference type="Gene3D" id="3.30.310.50">
    <property type="entry name" value="Alpha-D-phosphohexomutase, C-terminal domain"/>
    <property type="match status" value="1"/>
</dbReference>
<dbReference type="HAMAP" id="MF_01554_B">
    <property type="entry name" value="GlmM_B"/>
    <property type="match status" value="1"/>
</dbReference>
<dbReference type="InterPro" id="IPR005844">
    <property type="entry name" value="A-D-PHexomutase_a/b/a-I"/>
</dbReference>
<dbReference type="InterPro" id="IPR016055">
    <property type="entry name" value="A-D-PHexomutase_a/b/a-I/II/III"/>
</dbReference>
<dbReference type="InterPro" id="IPR005845">
    <property type="entry name" value="A-D-PHexomutase_a/b/a-II"/>
</dbReference>
<dbReference type="InterPro" id="IPR005846">
    <property type="entry name" value="A-D-PHexomutase_a/b/a-III"/>
</dbReference>
<dbReference type="InterPro" id="IPR005843">
    <property type="entry name" value="A-D-PHexomutase_C"/>
</dbReference>
<dbReference type="InterPro" id="IPR036900">
    <property type="entry name" value="A-D-PHexomutase_C_sf"/>
</dbReference>
<dbReference type="InterPro" id="IPR016066">
    <property type="entry name" value="A-D-PHexomutase_CS"/>
</dbReference>
<dbReference type="InterPro" id="IPR005841">
    <property type="entry name" value="Alpha-D-phosphohexomutase_SF"/>
</dbReference>
<dbReference type="InterPro" id="IPR006352">
    <property type="entry name" value="GlmM_bact"/>
</dbReference>
<dbReference type="InterPro" id="IPR050060">
    <property type="entry name" value="Phosphoglucosamine_mutase"/>
</dbReference>
<dbReference type="NCBIfam" id="TIGR01455">
    <property type="entry name" value="glmM"/>
    <property type="match status" value="1"/>
</dbReference>
<dbReference type="NCBIfam" id="NF008139">
    <property type="entry name" value="PRK10887.1"/>
    <property type="match status" value="1"/>
</dbReference>
<dbReference type="PANTHER" id="PTHR42946:SF1">
    <property type="entry name" value="PHOSPHOGLUCOMUTASE (ALPHA-D-GLUCOSE-1,6-BISPHOSPHATE-DEPENDENT)"/>
    <property type="match status" value="1"/>
</dbReference>
<dbReference type="PANTHER" id="PTHR42946">
    <property type="entry name" value="PHOSPHOHEXOSE MUTASE"/>
    <property type="match status" value="1"/>
</dbReference>
<dbReference type="Pfam" id="PF02878">
    <property type="entry name" value="PGM_PMM_I"/>
    <property type="match status" value="1"/>
</dbReference>
<dbReference type="Pfam" id="PF02879">
    <property type="entry name" value="PGM_PMM_II"/>
    <property type="match status" value="1"/>
</dbReference>
<dbReference type="Pfam" id="PF02880">
    <property type="entry name" value="PGM_PMM_III"/>
    <property type="match status" value="1"/>
</dbReference>
<dbReference type="Pfam" id="PF00408">
    <property type="entry name" value="PGM_PMM_IV"/>
    <property type="match status" value="1"/>
</dbReference>
<dbReference type="PRINTS" id="PR00509">
    <property type="entry name" value="PGMPMM"/>
</dbReference>
<dbReference type="SUPFAM" id="SSF55957">
    <property type="entry name" value="Phosphoglucomutase, C-terminal domain"/>
    <property type="match status" value="1"/>
</dbReference>
<dbReference type="SUPFAM" id="SSF53738">
    <property type="entry name" value="Phosphoglucomutase, first 3 domains"/>
    <property type="match status" value="3"/>
</dbReference>
<dbReference type="PROSITE" id="PS00710">
    <property type="entry name" value="PGM_PMM"/>
    <property type="match status" value="1"/>
</dbReference>
<evidence type="ECO:0000255" key="1">
    <source>
        <dbReference type="HAMAP-Rule" id="MF_01554"/>
    </source>
</evidence>
<proteinExistence type="inferred from homology"/>
<protein>
    <recommendedName>
        <fullName evidence="1">Phosphoglucosamine mutase</fullName>
        <ecNumber evidence="1">5.4.2.10</ecNumber>
    </recommendedName>
</protein>
<name>GLMM_CLOBL</name>
<accession>A7GJ15</accession>